<protein>
    <recommendedName>
        <fullName evidence="8">Phenoloxidase subunit 2</fullName>
        <ecNumber evidence="1">1.14.18.1</ecNumber>
    </recommendedName>
    <alternativeName>
        <fullName evidence="7">Prophenoloxidase subunit 2</fullName>
    </alternativeName>
</protein>
<organism evidence="9">
    <name type="scientific">Galleria mellonella</name>
    <name type="common">Greater wax moth</name>
    <dbReference type="NCBI Taxonomy" id="7137"/>
    <lineage>
        <taxon>Eukaryota</taxon>
        <taxon>Metazoa</taxon>
        <taxon>Ecdysozoa</taxon>
        <taxon>Arthropoda</taxon>
        <taxon>Hexapoda</taxon>
        <taxon>Insecta</taxon>
        <taxon>Pterygota</taxon>
        <taxon>Neoptera</taxon>
        <taxon>Endopterygota</taxon>
        <taxon>Lepidoptera</taxon>
        <taxon>Glossata</taxon>
        <taxon>Ditrysia</taxon>
        <taxon>Pyraloidea</taxon>
        <taxon>Pyralidae</taxon>
        <taxon>Galleriinae</taxon>
        <taxon>Galleria</taxon>
    </lineage>
</organism>
<feature type="propeptide" id="PRO_0000455044" evidence="3">
    <location>
        <begin position="1"/>
        <end position="97"/>
    </location>
</feature>
<feature type="chain" id="PRO_0000455045" description="Phenoloxidase subunit 2">
    <location>
        <begin position="98"/>
        <end position="692"/>
    </location>
</feature>
<feature type="active site" description="Proton acceptor" evidence="4">
    <location>
        <position position="351"/>
    </location>
</feature>
<feature type="binding site" evidence="2">
    <location>
        <position position="213"/>
    </location>
    <ligand>
        <name>Cu cation</name>
        <dbReference type="ChEBI" id="CHEBI:23378"/>
        <label>A</label>
    </ligand>
</feature>
<feature type="binding site" evidence="2">
    <location>
        <position position="217"/>
    </location>
    <ligand>
        <name>Cu cation</name>
        <dbReference type="ChEBI" id="CHEBI:23378"/>
        <label>A</label>
    </ligand>
</feature>
<feature type="binding site" evidence="2">
    <location>
        <position position="243"/>
    </location>
    <ligand>
        <name>Cu cation</name>
        <dbReference type="ChEBI" id="CHEBI:23378"/>
        <label>A</label>
    </ligand>
</feature>
<feature type="binding site" evidence="2">
    <location>
        <position position="366"/>
    </location>
    <ligand>
        <name>Cu cation</name>
        <dbReference type="ChEBI" id="CHEBI:23378"/>
        <label>B</label>
    </ligand>
</feature>
<feature type="binding site" evidence="2">
    <location>
        <position position="370"/>
    </location>
    <ligand>
        <name>Cu cation</name>
        <dbReference type="ChEBI" id="CHEBI:23378"/>
        <label>B</label>
    </ligand>
</feature>
<feature type="binding site" evidence="2">
    <location>
        <position position="406"/>
    </location>
    <ligand>
        <name>Cu cation</name>
        <dbReference type="ChEBI" id="CHEBI:23378"/>
        <label>B</label>
    </ligand>
</feature>
<feature type="glycosylation site" description="N-linked (GlcNAc...) asparagine" evidence="5">
    <location>
        <position position="256"/>
    </location>
</feature>
<feature type="glycosylation site" description="N-linked (GlcNAc...) asparagine" evidence="5">
    <location>
        <position position="295"/>
    </location>
</feature>
<feature type="glycosylation site" description="N-linked (GlcNAc...) asparagine" evidence="5">
    <location>
        <position position="309"/>
    </location>
</feature>
<feature type="glycosylation site" description="N-linked (GlcNAc...) asparagine" evidence="5">
    <location>
        <position position="494"/>
    </location>
</feature>
<feature type="disulfide bond" evidence="2">
    <location>
        <begin position="583"/>
        <end position="628"/>
    </location>
</feature>
<feature type="disulfide bond" evidence="2">
    <location>
        <begin position="585"/>
        <end position="635"/>
    </location>
</feature>
<reference evidence="9" key="1">
    <citation type="submission" date="2003-08" db="EMBL/GenBank/DDBJ databases">
        <title>Molecular cloning of prophenoloxidase-2 from a greater wax moth Galleria mellonella.</title>
        <authorList>
            <person name="Sojka D."/>
            <person name="Bender O."/>
            <person name="Weise C."/>
            <person name="Kopacek P."/>
        </authorList>
    </citation>
    <scope>NUCLEOTIDE SEQUENCE [MRNA]</scope>
</reference>
<reference evidence="8" key="2">
    <citation type="journal article" date="2021" name="Molecules">
        <title>Fungal alpha-1,3-Glucan as a New Pathogen-Associated Molecular Pattern in the Insect Model Host Galleria mellonella.</title>
        <authorList>
            <person name="Staczek S."/>
            <person name="Zdybicka-Barabas A."/>
            <person name="Wojda I."/>
            <person name="Wiater A."/>
            <person name="Mak P."/>
            <person name="Suder P."/>
            <person name="Skrzypiec K."/>
            <person name="Cytrynska M."/>
        </authorList>
    </citation>
    <scope>PROTEIN SEQUENCE OF 169-188</scope>
    <scope>FUNCTION</scope>
    <scope>SUBCELLULAR LOCATION</scope>
    <scope>DEVELOPMENTAL STAGE</scope>
</reference>
<accession>Q6UEH6</accession>
<accession>C0HLY8</accession>
<proteinExistence type="evidence at protein level"/>
<keyword id="KW-0186">Copper</keyword>
<keyword id="KW-0903">Direct protein sequencing</keyword>
<keyword id="KW-1015">Disulfide bond</keyword>
<keyword id="KW-0325">Glycoprotein</keyword>
<keyword id="KW-0479">Metal-binding</keyword>
<keyword id="KW-0503">Monooxygenase</keyword>
<keyword id="KW-0560">Oxidoreductase</keyword>
<keyword id="KW-1185">Reference proteome</keyword>
<keyword id="KW-0964">Secreted</keyword>
<dbReference type="EC" id="1.14.18.1" evidence="1"/>
<dbReference type="EMBL" id="AY371489">
    <property type="protein sequence ID" value="AAQ75026.1"/>
    <property type="molecule type" value="mRNA"/>
</dbReference>
<dbReference type="SMR" id="Q6UEH6"/>
<dbReference type="InParanoid" id="Q6UEH6"/>
<dbReference type="Proteomes" id="UP000504614">
    <property type="component" value="Unplaced"/>
</dbReference>
<dbReference type="GO" id="GO:0005576">
    <property type="term" value="C:extracellular region"/>
    <property type="evidence" value="ECO:0007669"/>
    <property type="project" value="UniProtKB-SubCell"/>
</dbReference>
<dbReference type="GO" id="GO:0046872">
    <property type="term" value="F:metal ion binding"/>
    <property type="evidence" value="ECO:0007669"/>
    <property type="project" value="UniProtKB-KW"/>
</dbReference>
<dbReference type="GO" id="GO:0004503">
    <property type="term" value="F:tyrosinase activity"/>
    <property type="evidence" value="ECO:0007669"/>
    <property type="project" value="UniProtKB-ARBA"/>
</dbReference>
<dbReference type="GO" id="GO:0006582">
    <property type="term" value="P:melanin metabolic process"/>
    <property type="evidence" value="ECO:0007669"/>
    <property type="project" value="UniProtKB-ARBA"/>
</dbReference>
<dbReference type="FunFam" id="1.10.1280.10:FF:000004">
    <property type="entry name" value="Hemocyanin subunit 2"/>
    <property type="match status" value="1"/>
</dbReference>
<dbReference type="FunFam" id="2.60.40.1520:FF:000001">
    <property type="entry name" value="Hemocyanin subunit 2"/>
    <property type="match status" value="1"/>
</dbReference>
<dbReference type="Gene3D" id="1.10.1280.10">
    <property type="entry name" value="Di-copper center containing domain from catechol oxidase"/>
    <property type="match status" value="1"/>
</dbReference>
<dbReference type="Gene3D" id="2.60.40.1520">
    <property type="entry name" value="Hemocyanin, C-terminal domain"/>
    <property type="match status" value="1"/>
</dbReference>
<dbReference type="Gene3D" id="1.20.1370.10">
    <property type="entry name" value="Hemocyanin, N-terminal domain"/>
    <property type="match status" value="1"/>
</dbReference>
<dbReference type="InterPro" id="IPR008922">
    <property type="entry name" value="Di-copper_centre_dom_sf"/>
</dbReference>
<dbReference type="InterPro" id="IPR013788">
    <property type="entry name" value="Hemocyanin/hexamerin"/>
</dbReference>
<dbReference type="InterPro" id="IPR000896">
    <property type="entry name" value="Hemocyanin/hexamerin_mid_dom"/>
</dbReference>
<dbReference type="InterPro" id="IPR005203">
    <property type="entry name" value="Hemocyanin_C"/>
</dbReference>
<dbReference type="InterPro" id="IPR037020">
    <property type="entry name" value="Hemocyanin_C_sf"/>
</dbReference>
<dbReference type="InterPro" id="IPR005204">
    <property type="entry name" value="Hemocyanin_N"/>
</dbReference>
<dbReference type="InterPro" id="IPR036697">
    <property type="entry name" value="Hemocyanin_N_sf"/>
</dbReference>
<dbReference type="InterPro" id="IPR014756">
    <property type="entry name" value="Ig_E-set"/>
</dbReference>
<dbReference type="InterPro" id="IPR002227">
    <property type="entry name" value="Tyrosinase_Cu-bd"/>
</dbReference>
<dbReference type="PANTHER" id="PTHR11511">
    <property type="entry name" value="LARVAL STORAGE PROTEIN/PHENOLOXIDASE"/>
    <property type="match status" value="1"/>
</dbReference>
<dbReference type="PANTHER" id="PTHR11511:SF4">
    <property type="entry name" value="PHENOLOXIDASE 2-RELATED"/>
    <property type="match status" value="1"/>
</dbReference>
<dbReference type="Pfam" id="PF03723">
    <property type="entry name" value="Hemocyanin_C"/>
    <property type="match status" value="1"/>
</dbReference>
<dbReference type="Pfam" id="PF00372">
    <property type="entry name" value="Hemocyanin_M"/>
    <property type="match status" value="1"/>
</dbReference>
<dbReference type="Pfam" id="PF03722">
    <property type="entry name" value="Hemocyanin_N"/>
    <property type="match status" value="1"/>
</dbReference>
<dbReference type="PRINTS" id="PR00187">
    <property type="entry name" value="HAEMOCYANIN"/>
</dbReference>
<dbReference type="SUPFAM" id="SSF48056">
    <property type="entry name" value="Di-copper centre-containing domain"/>
    <property type="match status" value="1"/>
</dbReference>
<dbReference type="SUPFAM" id="SSF81296">
    <property type="entry name" value="E set domains"/>
    <property type="match status" value="1"/>
</dbReference>
<dbReference type="SUPFAM" id="SSF48050">
    <property type="entry name" value="Hemocyanin, N-terminal domain"/>
    <property type="match status" value="1"/>
</dbReference>
<dbReference type="PROSITE" id="PS00209">
    <property type="entry name" value="HEMOCYANIN_1"/>
    <property type="match status" value="1"/>
</dbReference>
<dbReference type="PROSITE" id="PS00210">
    <property type="entry name" value="HEMOCYANIN_2"/>
    <property type="match status" value="1"/>
</dbReference>
<dbReference type="PROSITE" id="PS00498">
    <property type="entry name" value="TYROSINASE_2"/>
    <property type="match status" value="1"/>
</dbReference>
<sequence length="692" mass="79842">MTDRVKSLQLLFDRPNEPLITPKGENGAIFQLTQDLLPVDYEDNGIALNNRFGEEADEKIPLKPLSNPPQFPIASQLPTDADFSLFLPRHQEMATEVIDVLMNIPENQLDDLLSSCVYARGRLNPQLFNYCYSVVLMHRRDTRNVPIQNFAETFPSKFLDSQAFAQARETAAVFPRGIPRTPIIIPRDYTATDLEEEHRLAYWREDIGINLHHWQWHLVYPFTASDRSIVAKDRRGELFFYMHQQIIARYNCERINNSLKRVKKFNNWREPIPEAYFPKLDSLTSSRGWPPRQANMTWQDLNRPVDGLNVTISDMERWRRNLEEAVSMGTVTLPDGSTRPLDIDTLGNMVEASILSPNRELYGSVHNNGHSFSAYVHDPSHRYLENFGVIADEATTMRDPFFYRWHAWVDDLFQKHKESNFVRPYSRSELENPGVQVTSVSVETQGSPQNVLSTFWMSSDVDLSRGLDFSNRGPVYARFTHLNHRPFRYVIKVNNSGNARRTTVRIFISPKFDERNLAWSLVDQRKMFIEMDRFVTPLKAGENTITRQSTESTFTIPFEQTFRDLSVQADDPRRVDLAAFNFCGCGWPQHMLVPKGTEAGAPYVFFVMLSNYDLDRIDEPGNSPEISCKEASSFCGLRDRKYPDKRAMGFPFDRPSRTATSIEDFILPNMALQDITIRLNNVVEANPRNPRT</sequence>
<name>PRP2_GALME</name>
<evidence type="ECO:0000250" key="1">
    <source>
        <dbReference type="UniProtKB" id="C0HJM0"/>
    </source>
</evidence>
<evidence type="ECO:0000250" key="2">
    <source>
        <dbReference type="UniProtKB" id="Q25519"/>
    </source>
</evidence>
<evidence type="ECO:0000250" key="3">
    <source>
        <dbReference type="UniProtKB" id="Q3ZPT5"/>
    </source>
</evidence>
<evidence type="ECO:0000250" key="4">
    <source>
        <dbReference type="UniProtKB" id="Q8MZM3"/>
    </source>
</evidence>
<evidence type="ECO:0000255" key="5">
    <source>
        <dbReference type="PROSITE-ProRule" id="PRU00498"/>
    </source>
</evidence>
<evidence type="ECO:0000269" key="6">
    <source>
    </source>
</evidence>
<evidence type="ECO:0000303" key="7">
    <source>
    </source>
</evidence>
<evidence type="ECO:0000305" key="8"/>
<evidence type="ECO:0000312" key="9">
    <source>
        <dbReference type="EMBL" id="AAQ75026.1"/>
    </source>
</evidence>
<comment type="function">
    <text evidence="2 6">Copper-containing oxidase that functions in the formation of pigments such as melanins and other polyphenolic compounds (By similarity). Catalyzes the rate-limiting conversions of tyrosine to DOPA, DOPA to DOPA-quinone and possibly 5,6 dihydroxyindole to indole-5'6 quinone (By similarity). Binds to the surface of hemocytes and is involved in hemocyte melanization (By similarity). Binds the A.niger cell wall component alpha-1,3-glucan, a fungal pathogen-associated molecular pattern (PAMP) that activates the host immune response (PubMed:34443685).</text>
</comment>
<comment type="catalytic activity">
    <reaction evidence="1">
        <text>L-tyrosine + O2 = L-dopaquinone + H2O</text>
        <dbReference type="Rhea" id="RHEA:18117"/>
        <dbReference type="ChEBI" id="CHEBI:15377"/>
        <dbReference type="ChEBI" id="CHEBI:15379"/>
        <dbReference type="ChEBI" id="CHEBI:57924"/>
        <dbReference type="ChEBI" id="CHEBI:58315"/>
        <dbReference type="EC" id="1.14.18.1"/>
    </reaction>
</comment>
<comment type="catalytic activity">
    <reaction evidence="1">
        <text>2 L-dopa + O2 = 2 L-dopaquinone + 2 H2O</text>
        <dbReference type="Rhea" id="RHEA:34287"/>
        <dbReference type="ChEBI" id="CHEBI:15377"/>
        <dbReference type="ChEBI" id="CHEBI:15379"/>
        <dbReference type="ChEBI" id="CHEBI:57504"/>
        <dbReference type="ChEBI" id="CHEBI:57924"/>
        <dbReference type="EC" id="1.14.18.1"/>
    </reaction>
</comment>
<comment type="cofactor">
    <cofactor evidence="2">
        <name>Cu(2+)</name>
        <dbReference type="ChEBI" id="CHEBI:29036"/>
    </cofactor>
    <text evidence="2">Binds 2 copper ions per subunit.</text>
</comment>
<comment type="subunit">
    <text evidence="2">Heterodimer.</text>
</comment>
<comment type="subcellular location">
    <subcellularLocation>
        <location evidence="6">Secreted</location>
    </subcellularLocation>
    <text evidence="6">Secreted in the hemolymph.</text>
</comment>
<comment type="developmental stage">
    <text evidence="6">Expressed in last instar larvae.</text>
</comment>
<comment type="similarity">
    <text evidence="8">Belongs to the tyrosinase family.</text>
</comment>